<sequence length="337" mass="36685">MIEIDGSFGEGGGQILRTSLTLSVITGKPFRIFNIRANRPNPGLQRQHLWAVKAMKMISNAETKGDEVGSKELIFVPHEIKGNTNIDIDVGTAGSVTLIIQTVLPAIINKNVRIRIKGGTDVPKSPTIDYIRLVYLEILRKIGIEAKLNLIKRGHYPEGGGEVIIENVNGNPSAFSLLELGKLTIIKGISHVSSLPAHIAERQMNSAREILSKLGVPIEIQTDVRQGEVSKGSGIALAAIGEKSIIGADSLGERGKRAEIVGEEAARILIDNLNTKASVDIHMSDMLMIFASLYGGEYIGAELTSHAYTNMEIIKKFLDIKIDVSGKRPFRFKAKIF</sequence>
<protein>
    <recommendedName>
        <fullName evidence="1">RNA 3'-terminal phosphate cyclase</fullName>
        <shortName evidence="1">RNA cyclase</shortName>
        <shortName evidence="1">RNA-3'-phosphate cyclase</shortName>
        <ecNumber evidence="1">6.5.1.4</ecNumber>
    </recommendedName>
</protein>
<gene>
    <name evidence="1" type="primary">rtcA</name>
    <name type="ordered locus">M164_0253</name>
</gene>
<feature type="chain" id="PRO_1000204093" description="RNA 3'-terminal phosphate cyclase">
    <location>
        <begin position="1"/>
        <end position="337"/>
    </location>
</feature>
<feature type="active site" description="Tele-AMP-histidine intermediate" evidence="1">
    <location>
        <position position="306"/>
    </location>
</feature>
<feature type="binding site" evidence="1">
    <location>
        <position position="101"/>
    </location>
    <ligand>
        <name>ATP</name>
        <dbReference type="ChEBI" id="CHEBI:30616"/>
    </ligand>
</feature>
<feature type="binding site" evidence="1">
    <location>
        <begin position="282"/>
        <end position="285"/>
    </location>
    <ligand>
        <name>ATP</name>
        <dbReference type="ChEBI" id="CHEBI:30616"/>
    </ligand>
</feature>
<organism>
    <name type="scientific">Saccharolobus islandicus (strain M.16.4 / Kamchatka #3)</name>
    <name type="common">Sulfolobus islandicus</name>
    <dbReference type="NCBI Taxonomy" id="426118"/>
    <lineage>
        <taxon>Archaea</taxon>
        <taxon>Thermoproteota</taxon>
        <taxon>Thermoprotei</taxon>
        <taxon>Sulfolobales</taxon>
        <taxon>Sulfolobaceae</taxon>
        <taxon>Saccharolobus</taxon>
    </lineage>
</organism>
<accession>C4KKE6</accession>
<evidence type="ECO:0000255" key="1">
    <source>
        <dbReference type="HAMAP-Rule" id="MF_00200"/>
    </source>
</evidence>
<name>RTCA_SACI6</name>
<dbReference type="EC" id="6.5.1.4" evidence="1"/>
<dbReference type="EMBL" id="CP001402">
    <property type="protein sequence ID" value="ACR40887.1"/>
    <property type="molecule type" value="Genomic_DNA"/>
</dbReference>
<dbReference type="RefSeq" id="WP_012735432.1">
    <property type="nucleotide sequence ID" value="NC_012726.1"/>
</dbReference>
<dbReference type="SMR" id="C4KKE6"/>
<dbReference type="GeneID" id="15296718"/>
<dbReference type="GeneID" id="84060719"/>
<dbReference type="KEGG" id="sid:M164_0253"/>
<dbReference type="HOGENOM" id="CLU_027882_0_0_2"/>
<dbReference type="Proteomes" id="UP000001479">
    <property type="component" value="Chromosome"/>
</dbReference>
<dbReference type="GO" id="GO:0005737">
    <property type="term" value="C:cytoplasm"/>
    <property type="evidence" value="ECO:0007669"/>
    <property type="project" value="UniProtKB-SubCell"/>
</dbReference>
<dbReference type="GO" id="GO:0005524">
    <property type="term" value="F:ATP binding"/>
    <property type="evidence" value="ECO:0007669"/>
    <property type="project" value="UniProtKB-KW"/>
</dbReference>
<dbReference type="GO" id="GO:0003963">
    <property type="term" value="F:RNA-3'-phosphate cyclase activity"/>
    <property type="evidence" value="ECO:0007669"/>
    <property type="project" value="UniProtKB-UniRule"/>
</dbReference>
<dbReference type="GO" id="GO:0006396">
    <property type="term" value="P:RNA processing"/>
    <property type="evidence" value="ECO:0007669"/>
    <property type="project" value="InterPro"/>
</dbReference>
<dbReference type="CDD" id="cd00874">
    <property type="entry name" value="RNA_Cyclase_Class_II"/>
    <property type="match status" value="1"/>
</dbReference>
<dbReference type="FunFam" id="3.30.360.20:FF:000002">
    <property type="entry name" value="RNA terminal phosphate cyclase-like 1"/>
    <property type="match status" value="1"/>
</dbReference>
<dbReference type="Gene3D" id="3.65.10.20">
    <property type="entry name" value="RNA 3'-terminal phosphate cyclase domain"/>
    <property type="match status" value="1"/>
</dbReference>
<dbReference type="Gene3D" id="3.30.360.20">
    <property type="entry name" value="RNA 3'-terminal phosphate cyclase, insert domain"/>
    <property type="match status" value="1"/>
</dbReference>
<dbReference type="HAMAP" id="MF_00200">
    <property type="entry name" value="RTC"/>
    <property type="match status" value="1"/>
</dbReference>
<dbReference type="InterPro" id="IPR013791">
    <property type="entry name" value="RNA3'-term_phos_cycl_insert"/>
</dbReference>
<dbReference type="InterPro" id="IPR023797">
    <property type="entry name" value="RNA3'_phos_cyclase_dom"/>
</dbReference>
<dbReference type="InterPro" id="IPR037136">
    <property type="entry name" value="RNA3'_phos_cyclase_dom_sf"/>
</dbReference>
<dbReference type="InterPro" id="IPR000228">
    <property type="entry name" value="RNA3'_term_phos_cyc"/>
</dbReference>
<dbReference type="InterPro" id="IPR017770">
    <property type="entry name" value="RNA3'_term_phos_cyc_type_1"/>
</dbReference>
<dbReference type="InterPro" id="IPR020719">
    <property type="entry name" value="RNA3'_term_phos_cycl-like_CS"/>
</dbReference>
<dbReference type="InterPro" id="IPR013792">
    <property type="entry name" value="RNA3'P_cycl/enolpyr_Trfase_a/b"/>
</dbReference>
<dbReference type="InterPro" id="IPR036553">
    <property type="entry name" value="RPTC_insert"/>
</dbReference>
<dbReference type="NCBIfam" id="TIGR03399">
    <property type="entry name" value="RNA_3prim_cycl"/>
    <property type="match status" value="1"/>
</dbReference>
<dbReference type="PANTHER" id="PTHR11096">
    <property type="entry name" value="RNA 3' TERMINAL PHOSPHATE CYCLASE"/>
    <property type="match status" value="1"/>
</dbReference>
<dbReference type="PANTHER" id="PTHR11096:SF0">
    <property type="entry name" value="RNA 3'-TERMINAL PHOSPHATE CYCLASE"/>
    <property type="match status" value="1"/>
</dbReference>
<dbReference type="Pfam" id="PF01137">
    <property type="entry name" value="RTC"/>
    <property type="match status" value="1"/>
</dbReference>
<dbReference type="Pfam" id="PF05189">
    <property type="entry name" value="RTC_insert"/>
    <property type="match status" value="1"/>
</dbReference>
<dbReference type="PIRSF" id="PIRSF005378">
    <property type="entry name" value="RNA3'_term_phos_cycl_euk"/>
    <property type="match status" value="1"/>
</dbReference>
<dbReference type="SUPFAM" id="SSF55205">
    <property type="entry name" value="EPT/RTPC-like"/>
    <property type="match status" value="1"/>
</dbReference>
<dbReference type="PROSITE" id="PS01287">
    <property type="entry name" value="RTC"/>
    <property type="match status" value="1"/>
</dbReference>
<proteinExistence type="inferred from homology"/>
<keyword id="KW-0067">ATP-binding</keyword>
<keyword id="KW-0963">Cytoplasm</keyword>
<keyword id="KW-0436">Ligase</keyword>
<keyword id="KW-0547">Nucleotide-binding</keyword>
<comment type="function">
    <text evidence="1">Catalyzes the conversion of 3'-phosphate to a 2',3'-cyclic phosphodiester at the end of RNA. The mechanism of action of the enzyme occurs in 3 steps: (A) adenylation of the enzyme by ATP; (B) transfer of adenylate to an RNA-N3'P to produce RNA-N3'PP5'A; (C) and attack of the adjacent 2'-hydroxyl on the 3'-phosphorus in the diester linkage to produce the cyclic end product. The biological role of this enzyme is unknown but it is likely to function in some aspects of cellular RNA processing.</text>
</comment>
<comment type="catalytic activity">
    <reaction evidence="1">
        <text>a 3'-end 3'-phospho-ribonucleotide-RNA + ATP = a 3'-end 2',3'-cyclophospho-ribonucleotide-RNA + AMP + diphosphate</text>
        <dbReference type="Rhea" id="RHEA:23976"/>
        <dbReference type="Rhea" id="RHEA-COMP:10463"/>
        <dbReference type="Rhea" id="RHEA-COMP:10464"/>
        <dbReference type="ChEBI" id="CHEBI:30616"/>
        <dbReference type="ChEBI" id="CHEBI:33019"/>
        <dbReference type="ChEBI" id="CHEBI:83062"/>
        <dbReference type="ChEBI" id="CHEBI:83064"/>
        <dbReference type="ChEBI" id="CHEBI:456215"/>
        <dbReference type="EC" id="6.5.1.4"/>
    </reaction>
</comment>
<comment type="subcellular location">
    <subcellularLocation>
        <location evidence="1">Cytoplasm</location>
    </subcellularLocation>
</comment>
<comment type="similarity">
    <text evidence="1">Belongs to the RNA 3'-terminal cyclase family. Type 1 subfamily.</text>
</comment>
<reference key="1">
    <citation type="journal article" date="2009" name="Proc. Natl. Acad. Sci. U.S.A.">
        <title>Biogeography of the Sulfolobus islandicus pan-genome.</title>
        <authorList>
            <person name="Reno M.L."/>
            <person name="Held N.L."/>
            <person name="Fields C.J."/>
            <person name="Burke P.V."/>
            <person name="Whitaker R.J."/>
        </authorList>
    </citation>
    <scope>NUCLEOTIDE SEQUENCE [LARGE SCALE GENOMIC DNA]</scope>
    <source>
        <strain>M.16.4 / Kamchatka #3</strain>
    </source>
</reference>